<dbReference type="EMBL" id="CP001338">
    <property type="protein sequence ID" value="ACL17665.1"/>
    <property type="molecule type" value="Genomic_DNA"/>
</dbReference>
<dbReference type="RefSeq" id="WP_012618984.1">
    <property type="nucleotide sequence ID" value="NC_011832.1"/>
</dbReference>
<dbReference type="SMR" id="B8GEG4"/>
<dbReference type="STRING" id="521011.Mpal_2384"/>
<dbReference type="GeneID" id="7272106"/>
<dbReference type="KEGG" id="mpl:Mpal_2384"/>
<dbReference type="eggNOG" id="arCOG00780">
    <property type="taxonomic scope" value="Archaea"/>
</dbReference>
<dbReference type="HOGENOM" id="CLU_146465_0_0_2"/>
<dbReference type="OrthoDB" id="11309at2157"/>
<dbReference type="Proteomes" id="UP000002457">
    <property type="component" value="Chromosome"/>
</dbReference>
<dbReference type="GO" id="GO:0022625">
    <property type="term" value="C:cytosolic large ribosomal subunit"/>
    <property type="evidence" value="ECO:0007669"/>
    <property type="project" value="TreeGrafter"/>
</dbReference>
<dbReference type="GO" id="GO:0003723">
    <property type="term" value="F:RNA binding"/>
    <property type="evidence" value="ECO:0007669"/>
    <property type="project" value="TreeGrafter"/>
</dbReference>
<dbReference type="GO" id="GO:0003735">
    <property type="term" value="F:structural constituent of ribosome"/>
    <property type="evidence" value="ECO:0007669"/>
    <property type="project" value="InterPro"/>
</dbReference>
<dbReference type="GO" id="GO:0006412">
    <property type="term" value="P:translation"/>
    <property type="evidence" value="ECO:0007669"/>
    <property type="project" value="UniProtKB-UniRule"/>
</dbReference>
<dbReference type="Gene3D" id="3.100.10.10">
    <property type="match status" value="1"/>
</dbReference>
<dbReference type="HAMAP" id="MF_00329">
    <property type="entry name" value="Ribosomal_eL18"/>
    <property type="match status" value="1"/>
</dbReference>
<dbReference type="InterPro" id="IPR000039">
    <property type="entry name" value="Ribosomal_eL18"/>
</dbReference>
<dbReference type="InterPro" id="IPR022947">
    <property type="entry name" value="Ribosomal_eL18_arc"/>
</dbReference>
<dbReference type="InterPro" id="IPR021131">
    <property type="entry name" value="Ribosomal_uL15/eL18"/>
</dbReference>
<dbReference type="InterPro" id="IPR036227">
    <property type="entry name" value="Ribosomal_uL15/eL18_sf"/>
</dbReference>
<dbReference type="NCBIfam" id="NF003079">
    <property type="entry name" value="PRK04005.1"/>
    <property type="match status" value="1"/>
</dbReference>
<dbReference type="PANTHER" id="PTHR10934">
    <property type="entry name" value="60S RIBOSOMAL PROTEIN L18"/>
    <property type="match status" value="1"/>
</dbReference>
<dbReference type="PANTHER" id="PTHR10934:SF2">
    <property type="entry name" value="LARGE RIBOSOMAL SUBUNIT PROTEIN EL18"/>
    <property type="match status" value="1"/>
</dbReference>
<dbReference type="Pfam" id="PF17135">
    <property type="entry name" value="Ribosomal_L18"/>
    <property type="match status" value="1"/>
</dbReference>
<dbReference type="SUPFAM" id="SSF52080">
    <property type="entry name" value="Ribosomal proteins L15p and L18e"/>
    <property type="match status" value="1"/>
</dbReference>
<reference key="1">
    <citation type="journal article" date="2015" name="Genome Announc.">
        <title>Complete Genome Sequence of Methanosphaerula palustris E1-9CT, a Hydrogenotrophic Methanogen Isolated from a Minerotrophic Fen Peatland.</title>
        <authorList>
            <person name="Cadillo-Quiroz H."/>
            <person name="Browne P."/>
            <person name="Kyrpides N."/>
            <person name="Woyke T."/>
            <person name="Goodwin L."/>
            <person name="Detter C."/>
            <person name="Yavitt J.B."/>
            <person name="Zinder S.H."/>
        </authorList>
    </citation>
    <scope>NUCLEOTIDE SEQUENCE [LARGE SCALE GENOMIC DNA]</scope>
    <source>
        <strain>ATCC BAA-1556 / DSM 19958 / E1-9c</strain>
    </source>
</reference>
<accession>B8GEG4</accession>
<proteinExistence type="inferred from homology"/>
<gene>
    <name evidence="1" type="primary">rpl18e</name>
    <name type="ordered locus">Mpal_2384</name>
</gene>
<name>RL18E_METPE</name>
<sequence length="121" mass="13092">MTGRVKKTNPRLTSLITTLKDASRTGEVKIWRDIANRLEASTSAHAEVNISKINRYAAEGETILVPGKVLGSGMLNQSVRVAALNFSESAVSKIAKAQGTCMTIEELLANNPKGSRVRILR</sequence>
<organism>
    <name type="scientific">Methanosphaerula palustris (strain ATCC BAA-1556 / DSM 19958 / E1-9c)</name>
    <dbReference type="NCBI Taxonomy" id="521011"/>
    <lineage>
        <taxon>Archaea</taxon>
        <taxon>Methanobacteriati</taxon>
        <taxon>Methanobacteriota</taxon>
        <taxon>Stenosarchaea group</taxon>
        <taxon>Methanomicrobia</taxon>
        <taxon>Methanomicrobiales</taxon>
        <taxon>Methanoregulaceae</taxon>
        <taxon>Methanosphaerula</taxon>
    </lineage>
</organism>
<protein>
    <recommendedName>
        <fullName evidence="1">Large ribosomal subunit protein eL18</fullName>
    </recommendedName>
    <alternativeName>
        <fullName evidence="2">50S ribosomal protein L18e</fullName>
    </alternativeName>
</protein>
<evidence type="ECO:0000255" key="1">
    <source>
        <dbReference type="HAMAP-Rule" id="MF_00329"/>
    </source>
</evidence>
<evidence type="ECO:0000305" key="2"/>
<keyword id="KW-1185">Reference proteome</keyword>
<keyword id="KW-0687">Ribonucleoprotein</keyword>
<keyword id="KW-0689">Ribosomal protein</keyword>
<comment type="similarity">
    <text evidence="1">Belongs to the eukaryotic ribosomal protein eL18 family.</text>
</comment>
<feature type="chain" id="PRO_1000193771" description="Large ribosomal subunit protein eL18">
    <location>
        <begin position="1"/>
        <end position="121"/>
    </location>
</feature>